<evidence type="ECO:0000250" key="1"/>
<evidence type="ECO:0000305" key="2"/>
<protein>
    <recommendedName>
        <fullName>NAD-dependent dihydropyrimidine dehydrogenase subunit PreT</fullName>
        <shortName>DPD</shortName>
        <ecNumber>1.3.1.1</ecNumber>
    </recommendedName>
    <alternativeName>
        <fullName>Dihydrothymine dehydrogenase</fullName>
    </alternativeName>
    <alternativeName>
        <fullName>Dihydrouracil dehydrogenase</fullName>
    </alternativeName>
</protein>
<proteinExistence type="inferred from homology"/>
<dbReference type="EC" id="1.3.1.1"/>
<dbReference type="EMBL" id="AE006468">
    <property type="protein sequence ID" value="AAL21090.1"/>
    <property type="molecule type" value="Genomic_DNA"/>
</dbReference>
<dbReference type="RefSeq" id="NP_461131.1">
    <property type="nucleotide sequence ID" value="NC_003197.2"/>
</dbReference>
<dbReference type="RefSeq" id="WP_001136409.1">
    <property type="nucleotide sequence ID" value="NC_003197.2"/>
</dbReference>
<dbReference type="SMR" id="Q8ZNL8"/>
<dbReference type="STRING" id="99287.STM2186"/>
<dbReference type="PaxDb" id="99287-STM2186"/>
<dbReference type="GeneID" id="1253708"/>
<dbReference type="KEGG" id="stm:STM2186"/>
<dbReference type="PATRIC" id="fig|99287.12.peg.2313"/>
<dbReference type="HOGENOM" id="CLU_000422_3_3_6"/>
<dbReference type="OMA" id="QACVRNN"/>
<dbReference type="PhylomeDB" id="Q8ZNL8"/>
<dbReference type="BioCyc" id="SENT99287:STM2186-MONOMER"/>
<dbReference type="Proteomes" id="UP000001014">
    <property type="component" value="Chromosome"/>
</dbReference>
<dbReference type="GO" id="GO:0004159">
    <property type="term" value="F:dihydropyrimidine dehydrogenase (NAD+) activity"/>
    <property type="evidence" value="ECO:0007669"/>
    <property type="project" value="UniProtKB-EC"/>
</dbReference>
<dbReference type="GO" id="GO:0051536">
    <property type="term" value="F:iron-sulfur cluster binding"/>
    <property type="evidence" value="ECO:0007669"/>
    <property type="project" value="InterPro"/>
</dbReference>
<dbReference type="GO" id="GO:0003954">
    <property type="term" value="F:NADH dehydrogenase activity"/>
    <property type="evidence" value="ECO:0000250"/>
    <property type="project" value="UniProtKB"/>
</dbReference>
<dbReference type="GO" id="GO:0006208">
    <property type="term" value="P:pyrimidine nucleobase catabolic process"/>
    <property type="evidence" value="ECO:0000250"/>
    <property type="project" value="UniProtKB"/>
</dbReference>
<dbReference type="FunFam" id="1.10.1060.10:FF:000013">
    <property type="entry name" value="NAD-dependent dihydropyrimidine dehydrogenase subunit PreT"/>
    <property type="match status" value="1"/>
</dbReference>
<dbReference type="FunFam" id="3.50.50.60:FF:000148">
    <property type="entry name" value="NAD-dependent dihydropyrimidine dehydrogenase subunit PreT"/>
    <property type="match status" value="1"/>
</dbReference>
<dbReference type="Gene3D" id="1.10.1060.10">
    <property type="entry name" value="Alpha-helical ferredoxin"/>
    <property type="match status" value="1"/>
</dbReference>
<dbReference type="Gene3D" id="3.50.50.60">
    <property type="entry name" value="FAD/NAD(P)-binding domain"/>
    <property type="match status" value="2"/>
</dbReference>
<dbReference type="InterPro" id="IPR028261">
    <property type="entry name" value="DPD_II"/>
</dbReference>
<dbReference type="InterPro" id="IPR036188">
    <property type="entry name" value="FAD/NAD-bd_sf"/>
</dbReference>
<dbReference type="InterPro" id="IPR023753">
    <property type="entry name" value="FAD/NAD-binding_dom"/>
</dbReference>
<dbReference type="InterPro" id="IPR009051">
    <property type="entry name" value="Helical_ferredxn"/>
</dbReference>
<dbReference type="PANTHER" id="PTHR43073">
    <property type="entry name" value="DIHYDROPYRIMIDINE DEHYDROGENASE [NADP(+)]"/>
    <property type="match status" value="1"/>
</dbReference>
<dbReference type="PANTHER" id="PTHR43073:SF2">
    <property type="entry name" value="DIHYDROPYRIMIDINE DEHYDROGENASE [NADP(+)]"/>
    <property type="match status" value="1"/>
</dbReference>
<dbReference type="Pfam" id="PF14691">
    <property type="entry name" value="Fer4_20"/>
    <property type="match status" value="1"/>
</dbReference>
<dbReference type="Pfam" id="PF07992">
    <property type="entry name" value="Pyr_redox_2"/>
    <property type="match status" value="1"/>
</dbReference>
<dbReference type="PRINTS" id="PR00368">
    <property type="entry name" value="FADPNR"/>
</dbReference>
<dbReference type="PRINTS" id="PR00469">
    <property type="entry name" value="PNDRDTASEII"/>
</dbReference>
<dbReference type="SUPFAM" id="SSF46548">
    <property type="entry name" value="alpha-helical ferredoxin"/>
    <property type="match status" value="1"/>
</dbReference>
<dbReference type="SUPFAM" id="SSF51971">
    <property type="entry name" value="Nucleotide-binding domain"/>
    <property type="match status" value="1"/>
</dbReference>
<feature type="chain" id="PRO_0000169159" description="NAD-dependent dihydropyrimidine dehydrogenase subunit PreT">
    <location>
        <begin position="1"/>
        <end position="413"/>
    </location>
</feature>
<feature type="binding site" evidence="1">
    <location>
        <position position="287"/>
    </location>
    <ligand>
        <name>NAD(+)</name>
        <dbReference type="ChEBI" id="CHEBI:57540"/>
    </ligand>
</feature>
<reference key="1">
    <citation type="journal article" date="2001" name="Nature">
        <title>Complete genome sequence of Salmonella enterica serovar Typhimurium LT2.</title>
        <authorList>
            <person name="McClelland M."/>
            <person name="Sanderson K.E."/>
            <person name="Spieth J."/>
            <person name="Clifton S.W."/>
            <person name="Latreille P."/>
            <person name="Courtney L."/>
            <person name="Porwollik S."/>
            <person name="Ali J."/>
            <person name="Dante M."/>
            <person name="Du F."/>
            <person name="Hou S."/>
            <person name="Layman D."/>
            <person name="Leonard S."/>
            <person name="Nguyen C."/>
            <person name="Scott K."/>
            <person name="Holmes A."/>
            <person name="Grewal N."/>
            <person name="Mulvaney E."/>
            <person name="Ryan E."/>
            <person name="Sun H."/>
            <person name="Florea L."/>
            <person name="Miller W."/>
            <person name="Stoneking T."/>
            <person name="Nhan M."/>
            <person name="Waterston R."/>
            <person name="Wilson R.K."/>
        </authorList>
    </citation>
    <scope>NUCLEOTIDE SEQUENCE [LARGE SCALE GENOMIC DNA]</scope>
    <source>
        <strain>LT2 / SGSC1412 / ATCC 700720</strain>
    </source>
</reference>
<keyword id="KW-0520">NAD</keyword>
<keyword id="KW-0560">Oxidoreductase</keyword>
<keyword id="KW-1185">Reference proteome</keyword>
<comment type="function">
    <text evidence="1">Involved in pyrimidine base degradation. Catalyzes physiologically the reduction of uracil to 5,6-dihydrouracil (DHU) by using NADH as a specific cosubstrate. It also catalyzes the reverse reaction and the reduction of thymine to 5,6-dihydrothymine (DHT) (By similarity).</text>
</comment>
<comment type="catalytic activity">
    <reaction>
        <text>5,6-dihydrouracil + NAD(+) = uracil + NADH + H(+)</text>
        <dbReference type="Rhea" id="RHEA:20189"/>
        <dbReference type="ChEBI" id="CHEBI:15378"/>
        <dbReference type="ChEBI" id="CHEBI:15901"/>
        <dbReference type="ChEBI" id="CHEBI:17568"/>
        <dbReference type="ChEBI" id="CHEBI:57540"/>
        <dbReference type="ChEBI" id="CHEBI:57945"/>
        <dbReference type="EC" id="1.3.1.1"/>
    </reaction>
</comment>
<comment type="catalytic activity">
    <reaction>
        <text>5,6-dihydrothymine + NAD(+) = thymine + NADH + H(+)</text>
        <dbReference type="Rhea" id="RHEA:28791"/>
        <dbReference type="ChEBI" id="CHEBI:15378"/>
        <dbReference type="ChEBI" id="CHEBI:17821"/>
        <dbReference type="ChEBI" id="CHEBI:27468"/>
        <dbReference type="ChEBI" id="CHEBI:57540"/>
        <dbReference type="ChEBI" id="CHEBI:57945"/>
        <dbReference type="EC" id="1.3.1.1"/>
    </reaction>
</comment>
<comment type="subunit">
    <text evidence="1">Heterotetramer of 2 PreA and 2 PreT subunits.</text>
</comment>
<comment type="similarity">
    <text evidence="2">Belongs to the NADH dehydrogenase family.</text>
</comment>
<gene>
    <name type="primary">preT</name>
    <name type="synonym">yeiT</name>
    <name type="ordered locus">STM2186</name>
</gene>
<accession>Q8ZNL8</accession>
<sequence length="413" mass="44537">MPQQNYLDELTPGFTPLLAIKEASRCLLCHDAPCSQACPAQTDPGKFIRSIYFRNFKGAAETIRENNALGAVCARVCPTEKLCQRGCTRSGIDKPIDIARLQRFITDFEQQTAMQIYQPGSKTRGKVAIIGAGPAGLQASVTLTHLGYDVTIYEKQPQPGGWLRHGIPAFRLPQSVLDQEIARIVEMGVNIKCNCEVGGSLSLAQLKAEYRAVLMTVGMSCGSGLPLFEQASHVEIAVDFLQRARQADGDISVPRSALIIGGGDVAMDVASTLKILGCPSVTCVAREELAEFPASEKEFTSTQALGVSIIDGFTPVAVSGNKVTFHHVRHSGELTLEAENIILAVGQHARLDTFAEIKAQHNIIDTHNYQTDDPAIFAAGDIVKGDKTVVYAVKTGKEAAQAIHHYLEEACSC</sequence>
<organism>
    <name type="scientific">Salmonella typhimurium (strain LT2 / SGSC1412 / ATCC 700720)</name>
    <dbReference type="NCBI Taxonomy" id="99287"/>
    <lineage>
        <taxon>Bacteria</taxon>
        <taxon>Pseudomonadati</taxon>
        <taxon>Pseudomonadota</taxon>
        <taxon>Gammaproteobacteria</taxon>
        <taxon>Enterobacterales</taxon>
        <taxon>Enterobacteriaceae</taxon>
        <taxon>Salmonella</taxon>
    </lineage>
</organism>
<name>PRET_SALTY</name>